<proteinExistence type="evidence at transcript level"/>
<protein>
    <recommendedName>
        <fullName>Ras-related protein Rab-21</fullName>
        <ecNumber evidence="2">3.6.5.2</ecNumber>
    </recommendedName>
</protein>
<feature type="initiator methionine" description="Removed" evidence="4">
    <location>
        <position position="1"/>
    </location>
</feature>
<feature type="chain" id="PRO_0000312571" description="Ras-related protein Rab-21">
    <location>
        <begin position="2"/>
        <end position="220"/>
    </location>
</feature>
<feature type="propeptide" id="PRO_0000370770" description="Removed in mature form" evidence="5">
    <location>
        <begin position="221"/>
        <end position="223"/>
    </location>
</feature>
<feature type="short sequence motif" description="Switch 1" evidence="4">
    <location>
        <begin position="41"/>
        <end position="54"/>
    </location>
</feature>
<feature type="short sequence motif" description="Switch 2" evidence="4">
    <location>
        <begin position="74"/>
        <end position="92"/>
    </location>
</feature>
<feature type="binding site" evidence="4">
    <location>
        <position position="26"/>
    </location>
    <ligand>
        <name>GTP</name>
        <dbReference type="ChEBI" id="CHEBI:37565"/>
    </ligand>
</feature>
<feature type="binding site" evidence="4">
    <location>
        <position position="29"/>
    </location>
    <ligand>
        <name>GTP</name>
        <dbReference type="ChEBI" id="CHEBI:37565"/>
    </ligand>
</feature>
<feature type="binding site" evidence="4">
    <location>
        <position position="30"/>
    </location>
    <ligand>
        <name>GTP</name>
        <dbReference type="ChEBI" id="CHEBI:37565"/>
    </ligand>
</feature>
<feature type="binding site" evidence="4">
    <location>
        <position position="31"/>
    </location>
    <ligand>
        <name>GTP</name>
        <dbReference type="ChEBI" id="CHEBI:37565"/>
    </ligand>
</feature>
<feature type="binding site" evidence="4">
    <location>
        <position position="31"/>
    </location>
    <ligand>
        <name>Mg(2+)</name>
        <dbReference type="ChEBI" id="CHEBI:18420"/>
    </ligand>
</feature>
<feature type="binding site" evidence="4">
    <location>
        <position position="32"/>
    </location>
    <ligand>
        <name>GTP</name>
        <dbReference type="ChEBI" id="CHEBI:37565"/>
    </ligand>
</feature>
<feature type="binding site" evidence="4">
    <location>
        <position position="43"/>
    </location>
    <ligand>
        <name>GTP</name>
        <dbReference type="ChEBI" id="CHEBI:37565"/>
    </ligand>
</feature>
<feature type="binding site" evidence="4">
    <location>
        <position position="44"/>
    </location>
    <ligand>
        <name>GTP</name>
        <dbReference type="ChEBI" id="CHEBI:37565"/>
    </ligand>
</feature>
<feature type="binding site" evidence="4">
    <location>
        <position position="46"/>
    </location>
    <ligand>
        <name>GTP</name>
        <dbReference type="ChEBI" id="CHEBI:37565"/>
    </ligand>
</feature>
<feature type="binding site" evidence="4">
    <location>
        <position position="48"/>
    </location>
    <ligand>
        <name>GTP</name>
        <dbReference type="ChEBI" id="CHEBI:37565"/>
    </ligand>
</feature>
<feature type="binding site" evidence="4">
    <location>
        <position position="49"/>
    </location>
    <ligand>
        <name>GTP</name>
        <dbReference type="ChEBI" id="CHEBI:37565"/>
    </ligand>
</feature>
<feature type="binding site" evidence="4">
    <location>
        <position position="49"/>
    </location>
    <ligand>
        <name>Mg(2+)</name>
        <dbReference type="ChEBI" id="CHEBI:18420"/>
    </ligand>
</feature>
<feature type="binding site" evidence="4">
    <location>
        <position position="72"/>
    </location>
    <ligand>
        <name>Mg(2+)</name>
        <dbReference type="ChEBI" id="CHEBI:18420"/>
    </ligand>
</feature>
<feature type="binding site" evidence="4">
    <location>
        <position position="75"/>
    </location>
    <ligand>
        <name>GTP</name>
        <dbReference type="ChEBI" id="CHEBI:37565"/>
    </ligand>
</feature>
<feature type="binding site" evidence="4">
    <location>
        <position position="130"/>
    </location>
    <ligand>
        <name>GTP</name>
        <dbReference type="ChEBI" id="CHEBI:37565"/>
    </ligand>
</feature>
<feature type="binding site" evidence="4">
    <location>
        <position position="131"/>
    </location>
    <ligand>
        <name>GTP</name>
        <dbReference type="ChEBI" id="CHEBI:37565"/>
    </ligand>
</feature>
<feature type="binding site" evidence="4">
    <location>
        <position position="133"/>
    </location>
    <ligand>
        <name>GTP</name>
        <dbReference type="ChEBI" id="CHEBI:37565"/>
    </ligand>
</feature>
<feature type="binding site" evidence="4">
    <location>
        <position position="161"/>
    </location>
    <ligand>
        <name>GTP</name>
        <dbReference type="ChEBI" id="CHEBI:37565"/>
    </ligand>
</feature>
<feature type="binding site" evidence="4">
    <location>
        <position position="162"/>
    </location>
    <ligand>
        <name>GTP</name>
        <dbReference type="ChEBI" id="CHEBI:37565"/>
    </ligand>
</feature>
<feature type="modified residue" description="N-acetylalanine" evidence="4">
    <location>
        <position position="2"/>
    </location>
</feature>
<feature type="modified residue" description="Cysteine methyl ester" evidence="5">
    <location>
        <position position="220"/>
    </location>
</feature>
<feature type="lipid moiety-binding region" description="S-geranylgeranyl cysteine" evidence="1">
    <location>
        <position position="219"/>
    </location>
</feature>
<feature type="lipid moiety-binding region" description="S-geranylgeranyl cysteine" evidence="1">
    <location>
        <position position="220"/>
    </location>
</feature>
<name>RAB21_RAT</name>
<accession>Q6AXT5</accession>
<keyword id="KW-0007">Acetylation</keyword>
<keyword id="KW-0966">Cell projection</keyword>
<keyword id="KW-0968">Cytoplasmic vesicle</keyword>
<keyword id="KW-0256">Endoplasmic reticulum</keyword>
<keyword id="KW-0967">Endosome</keyword>
<keyword id="KW-0333">Golgi apparatus</keyword>
<keyword id="KW-0342">GTP-binding</keyword>
<keyword id="KW-0378">Hydrolase</keyword>
<keyword id="KW-0449">Lipoprotein</keyword>
<keyword id="KW-0460">Magnesium</keyword>
<keyword id="KW-0472">Membrane</keyword>
<keyword id="KW-0479">Metal-binding</keyword>
<keyword id="KW-0488">Methylation</keyword>
<keyword id="KW-0547">Nucleotide-binding</keyword>
<keyword id="KW-0636">Prenylation</keyword>
<keyword id="KW-0653">Protein transport</keyword>
<keyword id="KW-1185">Reference proteome</keyword>
<keyword id="KW-0813">Transport</keyword>
<dbReference type="EC" id="3.6.5.2" evidence="2"/>
<dbReference type="EMBL" id="BC079323">
    <property type="protein sequence ID" value="AAH79323.1"/>
    <property type="molecule type" value="mRNA"/>
</dbReference>
<dbReference type="RefSeq" id="NP_001004238.1">
    <property type="nucleotide sequence ID" value="NM_001004238.1"/>
</dbReference>
<dbReference type="SMR" id="Q6AXT5"/>
<dbReference type="FunCoup" id="Q6AXT5">
    <property type="interactions" value="3664"/>
</dbReference>
<dbReference type="STRING" id="10116.ENSRNOP00000005258"/>
<dbReference type="iPTMnet" id="Q6AXT5"/>
<dbReference type="PhosphoSitePlus" id="Q6AXT5"/>
<dbReference type="jPOST" id="Q6AXT5"/>
<dbReference type="PaxDb" id="10116-ENSRNOP00000005258"/>
<dbReference type="Ensembl" id="ENSRNOT00000005258.5">
    <property type="protein sequence ID" value="ENSRNOP00000005258.4"/>
    <property type="gene ID" value="ENSRNOG00000003923.5"/>
</dbReference>
<dbReference type="GeneID" id="299799"/>
<dbReference type="KEGG" id="rno:299799"/>
<dbReference type="UCSC" id="RGD:1303150">
    <property type="organism name" value="rat"/>
</dbReference>
<dbReference type="AGR" id="RGD:1303150"/>
<dbReference type="CTD" id="23011"/>
<dbReference type="RGD" id="1303150">
    <property type="gene designation" value="Rab21"/>
</dbReference>
<dbReference type="eggNOG" id="KOG0088">
    <property type="taxonomic scope" value="Eukaryota"/>
</dbReference>
<dbReference type="GeneTree" id="ENSGT00940000156786"/>
<dbReference type="HOGENOM" id="CLU_041217_10_2_1"/>
<dbReference type="InParanoid" id="Q6AXT5"/>
<dbReference type="OMA" id="NDEQHRN"/>
<dbReference type="OrthoDB" id="63533at2759"/>
<dbReference type="PhylomeDB" id="Q6AXT5"/>
<dbReference type="TreeFam" id="TF300199"/>
<dbReference type="Reactome" id="R-RNO-8873719">
    <property type="pathway name" value="RAB geranylgeranylation"/>
</dbReference>
<dbReference type="Reactome" id="R-RNO-8876198">
    <property type="pathway name" value="RAB GEFs exchange GTP for GDP on RABs"/>
</dbReference>
<dbReference type="PRO" id="PR:Q6AXT5"/>
<dbReference type="Proteomes" id="UP000002494">
    <property type="component" value="Chromosome 7"/>
</dbReference>
<dbReference type="Bgee" id="ENSRNOG00000003923">
    <property type="expression patterns" value="Expressed in esophagus and 19 other cell types or tissues"/>
</dbReference>
<dbReference type="GO" id="GO:1904115">
    <property type="term" value="C:axon cytoplasm"/>
    <property type="evidence" value="ECO:0007669"/>
    <property type="project" value="GOC"/>
</dbReference>
<dbReference type="GO" id="GO:0032154">
    <property type="term" value="C:cleavage furrow"/>
    <property type="evidence" value="ECO:0007669"/>
    <property type="project" value="UniProtKB-SubCell"/>
</dbReference>
<dbReference type="GO" id="GO:0098559">
    <property type="term" value="C:cytoplasmic side of early endosome membrane"/>
    <property type="evidence" value="ECO:0000266"/>
    <property type="project" value="RGD"/>
</dbReference>
<dbReference type="GO" id="GO:0009898">
    <property type="term" value="C:cytoplasmic side of plasma membrane"/>
    <property type="evidence" value="ECO:0000266"/>
    <property type="project" value="RGD"/>
</dbReference>
<dbReference type="GO" id="GO:0005769">
    <property type="term" value="C:early endosome"/>
    <property type="evidence" value="ECO:0000318"/>
    <property type="project" value="GO_Central"/>
</dbReference>
<dbReference type="GO" id="GO:0012505">
    <property type="term" value="C:endomembrane system"/>
    <property type="evidence" value="ECO:0000318"/>
    <property type="project" value="GO_Central"/>
</dbReference>
<dbReference type="GO" id="GO:0005789">
    <property type="term" value="C:endoplasmic reticulum membrane"/>
    <property type="evidence" value="ECO:0007669"/>
    <property type="project" value="UniProtKB-SubCell"/>
</dbReference>
<dbReference type="GO" id="GO:0032580">
    <property type="term" value="C:Golgi cisterna membrane"/>
    <property type="evidence" value="ECO:0000266"/>
    <property type="project" value="RGD"/>
</dbReference>
<dbReference type="GO" id="GO:0000139">
    <property type="term" value="C:Golgi membrane"/>
    <property type="evidence" value="ECO:0007669"/>
    <property type="project" value="UniProtKB-SubCell"/>
</dbReference>
<dbReference type="GO" id="GO:0043005">
    <property type="term" value="C:neuron projection"/>
    <property type="evidence" value="ECO:0000314"/>
    <property type="project" value="UniProtKB"/>
</dbReference>
<dbReference type="GO" id="GO:0045202">
    <property type="term" value="C:synapse"/>
    <property type="evidence" value="ECO:0000314"/>
    <property type="project" value="SynGO"/>
</dbReference>
<dbReference type="GO" id="GO:0005802">
    <property type="term" value="C:trans-Golgi network"/>
    <property type="evidence" value="ECO:0000266"/>
    <property type="project" value="RGD"/>
</dbReference>
<dbReference type="GO" id="GO:0012506">
    <property type="term" value="C:vesicle membrane"/>
    <property type="evidence" value="ECO:0000266"/>
    <property type="project" value="RGD"/>
</dbReference>
<dbReference type="GO" id="GO:0019003">
    <property type="term" value="F:GDP binding"/>
    <property type="evidence" value="ECO:0000250"/>
    <property type="project" value="UniProtKB"/>
</dbReference>
<dbReference type="GO" id="GO:0005525">
    <property type="term" value="F:GTP binding"/>
    <property type="evidence" value="ECO:0000250"/>
    <property type="project" value="UniProtKB"/>
</dbReference>
<dbReference type="GO" id="GO:0003924">
    <property type="term" value="F:GTPase activity"/>
    <property type="evidence" value="ECO:0000250"/>
    <property type="project" value="UniProtKB"/>
</dbReference>
<dbReference type="GO" id="GO:0008089">
    <property type="term" value="P:anterograde axonal transport"/>
    <property type="evidence" value="ECO:0000314"/>
    <property type="project" value="UniProtKB"/>
</dbReference>
<dbReference type="GO" id="GO:0006886">
    <property type="term" value="P:intracellular protein transport"/>
    <property type="evidence" value="ECO:0000318"/>
    <property type="project" value="GO_Central"/>
</dbReference>
<dbReference type="GO" id="GO:0050775">
    <property type="term" value="P:positive regulation of dendrite morphogenesis"/>
    <property type="evidence" value="ECO:0000266"/>
    <property type="project" value="RGD"/>
</dbReference>
<dbReference type="GO" id="GO:2000643">
    <property type="term" value="P:positive regulation of early endosome to late endosome transport"/>
    <property type="evidence" value="ECO:0000266"/>
    <property type="project" value="RGD"/>
</dbReference>
<dbReference type="GO" id="GO:0048260">
    <property type="term" value="P:positive regulation of receptor-mediated endocytosis"/>
    <property type="evidence" value="ECO:0000266"/>
    <property type="project" value="RGD"/>
</dbReference>
<dbReference type="GO" id="GO:0050821">
    <property type="term" value="P:protein stabilization"/>
    <property type="evidence" value="ECO:0000250"/>
    <property type="project" value="UniProtKB"/>
</dbReference>
<dbReference type="GO" id="GO:0032482">
    <property type="term" value="P:Rab protein signal transduction"/>
    <property type="evidence" value="ECO:0007669"/>
    <property type="project" value="InterPro"/>
</dbReference>
<dbReference type="GO" id="GO:0030516">
    <property type="term" value="P:regulation of axon extension"/>
    <property type="evidence" value="ECO:0000314"/>
    <property type="project" value="UniProtKB"/>
</dbReference>
<dbReference type="GO" id="GO:0017157">
    <property type="term" value="P:regulation of exocytosis"/>
    <property type="evidence" value="ECO:0000266"/>
    <property type="project" value="RGD"/>
</dbReference>
<dbReference type="CDD" id="cd04123">
    <property type="entry name" value="Rab21"/>
    <property type="match status" value="1"/>
</dbReference>
<dbReference type="FunFam" id="3.40.50.300:FF:000550">
    <property type="entry name" value="ras-related protein Rab-21"/>
    <property type="match status" value="1"/>
</dbReference>
<dbReference type="Gene3D" id="3.40.50.300">
    <property type="entry name" value="P-loop containing nucleotide triphosphate hydrolases"/>
    <property type="match status" value="1"/>
</dbReference>
<dbReference type="InterPro" id="IPR027417">
    <property type="entry name" value="P-loop_NTPase"/>
</dbReference>
<dbReference type="InterPro" id="IPR041833">
    <property type="entry name" value="Rab21"/>
</dbReference>
<dbReference type="InterPro" id="IPR005225">
    <property type="entry name" value="Small_GTP-bd"/>
</dbReference>
<dbReference type="InterPro" id="IPR001806">
    <property type="entry name" value="Small_GTPase"/>
</dbReference>
<dbReference type="NCBIfam" id="TIGR00231">
    <property type="entry name" value="small_GTP"/>
    <property type="match status" value="1"/>
</dbReference>
<dbReference type="PANTHER" id="PTHR47978">
    <property type="match status" value="1"/>
</dbReference>
<dbReference type="Pfam" id="PF00071">
    <property type="entry name" value="Ras"/>
    <property type="match status" value="1"/>
</dbReference>
<dbReference type="PRINTS" id="PR00449">
    <property type="entry name" value="RASTRNSFRMNG"/>
</dbReference>
<dbReference type="SMART" id="SM00175">
    <property type="entry name" value="RAB"/>
    <property type="match status" value="1"/>
</dbReference>
<dbReference type="SMART" id="SM00176">
    <property type="entry name" value="RAN"/>
    <property type="match status" value="1"/>
</dbReference>
<dbReference type="SMART" id="SM00173">
    <property type="entry name" value="RAS"/>
    <property type="match status" value="1"/>
</dbReference>
<dbReference type="SMART" id="SM00174">
    <property type="entry name" value="RHO"/>
    <property type="match status" value="1"/>
</dbReference>
<dbReference type="SUPFAM" id="SSF52540">
    <property type="entry name" value="P-loop containing nucleoside triphosphate hydrolases"/>
    <property type="match status" value="1"/>
</dbReference>
<dbReference type="PROSITE" id="PS51419">
    <property type="entry name" value="RAB"/>
    <property type="match status" value="1"/>
</dbReference>
<organism>
    <name type="scientific">Rattus norvegicus</name>
    <name type="common">Rat</name>
    <dbReference type="NCBI Taxonomy" id="10116"/>
    <lineage>
        <taxon>Eukaryota</taxon>
        <taxon>Metazoa</taxon>
        <taxon>Chordata</taxon>
        <taxon>Craniata</taxon>
        <taxon>Vertebrata</taxon>
        <taxon>Euteleostomi</taxon>
        <taxon>Mammalia</taxon>
        <taxon>Eutheria</taxon>
        <taxon>Euarchontoglires</taxon>
        <taxon>Glires</taxon>
        <taxon>Rodentia</taxon>
        <taxon>Myomorpha</taxon>
        <taxon>Muroidea</taxon>
        <taxon>Muridae</taxon>
        <taxon>Murinae</taxon>
        <taxon>Rattus</taxon>
    </lineage>
</organism>
<reference key="1">
    <citation type="journal article" date="2004" name="Genome Res.">
        <title>The status, quality, and expansion of the NIH full-length cDNA project: the Mammalian Gene Collection (MGC).</title>
        <authorList>
            <consortium name="The MGC Project Team"/>
        </authorList>
    </citation>
    <scope>NUCLEOTIDE SEQUENCE [LARGE SCALE MRNA]</scope>
    <source>
        <tissue>Testis</tissue>
    </source>
</reference>
<reference key="2">
    <citation type="journal article" date="2009" name="EMBO Rep.">
        <title>Role of Varp, a Rab21 exchange factor and TI-VAMP/VAMP7 partner, in neurite growth.</title>
        <authorList>
            <person name="Burgo A."/>
            <person name="Sotirakis E."/>
            <person name="Simmler M.C."/>
            <person name="Verraes A."/>
            <person name="Chamot C."/>
            <person name="Simpson J.C."/>
            <person name="Lanzetti L."/>
            <person name="Proux-Gillardeaux V."/>
            <person name="Galli T."/>
        </authorList>
    </citation>
    <scope>FUNCTION</scope>
    <scope>SUBCELLULAR LOCATION</scope>
</reference>
<comment type="function">
    <text evidence="3 4 6">The small GTPases Rab are key regulators of intracellular membrane trafficking, from the formation of transport vesicles to their fusion with membranes. Rabs cycle between an inactive GDP-bound form and an active GTP-bound form that is able to recruit to membranes different sets of downstream effectors directly responsible for vesicle formation, movement, tethering and fusion (By similarity). RAB21 is involved in membrane trafficking control (By similarity). Regulates integrin internalization and recycling, but does not influence the traffic of endosomally translocated receptors in general (By similarity). As a result, may regulate cell adhesion and migration (By similarity). During the mitosis of adherent cells, controls the endosomal trafficking of integrins which is required for the successful completion of cytokinesis (By similarity). Involved in neurite growth (PubMed:19745841). Following SBF2/MTMT13-mediated activation in response to starvation-induced autophagy, binds to and regulates SNARE protein VAMP8 endolysosomal transport required for SNARE-mediated autophagosome-lysosome fusion (By similarity). Modulates protein levels of the cargo receptors TMED2 and TMED10, and required for appropriate Golgi localization of TMED10 (By similarity).</text>
</comment>
<comment type="catalytic activity">
    <reaction evidence="2">
        <text>GTP + H2O = GDP + phosphate + H(+)</text>
        <dbReference type="Rhea" id="RHEA:19669"/>
        <dbReference type="ChEBI" id="CHEBI:15377"/>
        <dbReference type="ChEBI" id="CHEBI:15378"/>
        <dbReference type="ChEBI" id="CHEBI:37565"/>
        <dbReference type="ChEBI" id="CHEBI:43474"/>
        <dbReference type="ChEBI" id="CHEBI:58189"/>
        <dbReference type="EC" id="3.6.5.2"/>
    </reaction>
    <physiologicalReaction direction="left-to-right" evidence="2">
        <dbReference type="Rhea" id="RHEA:19670"/>
    </physiologicalReaction>
</comment>
<comment type="cofactor">
    <cofactor evidence="4">
        <name>Mg(2+)</name>
        <dbReference type="ChEBI" id="CHEBI:18420"/>
    </cofactor>
</comment>
<comment type="activity regulation">
    <text evidence="4 7">Regulated by guanine nucleotide exchange factors (GEFs) including ANKRD27 and RABGEF1, which promote the exchange of bound GDP for free GTP (By similarity). Regulated by GTPase activating proteins (GAPs) which increase the GTP hydrolysis activity. Inhibited by GDP dissociation inhibitors (GDIs) (Probable).</text>
</comment>
<comment type="subunit">
    <text evidence="3 4">Interacts with the cytoplasmic tail of integrins ITGA1, ITGA2, ITGA5, ITGA6, ITGA11 and ITGB1; this interaction is dependent upon its GDP/GTP cycle (By similarity). Interacts with RABGEF1 (via VPS9 domain) (By similarity). Interacts with ANKRD27 (By similarity). Interacts (in GTP-bound form) with VAMP8 in response to starvation; the interaction probably regulates VAMP8 endolysosomal trafficking (By similarity). Interacts (active GTP-bound form) with TMED10; the interaction is indirect and regulates TMED10 abundance and localization at the Golgi (By similarity).</text>
</comment>
<comment type="subcellular location">
    <subcellularLocation>
        <location evidence="3">Endoplasmic reticulum membrane</location>
        <topology evidence="7">Lipid-anchor</topology>
    </subcellularLocation>
    <subcellularLocation>
        <location evidence="6">Golgi apparatus</location>
        <location evidence="6">trans-Golgi network</location>
    </subcellularLocation>
    <subcellularLocation>
        <location evidence="3">Golgi apparatus membrane</location>
    </subcellularLocation>
    <subcellularLocation>
        <location evidence="3">Early endosome membrane</location>
    </subcellularLocation>
    <subcellularLocation>
        <location evidence="3">Cytoplasmic vesicle membrane</location>
    </subcellularLocation>
    <subcellularLocation>
        <location evidence="3">Cleavage furrow</location>
    </subcellularLocation>
    <subcellularLocation>
        <location evidence="6">Cell projection</location>
        <location evidence="6">Neuron projection</location>
    </subcellularLocation>
    <text evidence="3 6">Colocalizes with ANKRD27 and VAMP7 in neurites (PubMed:19745841). During mitosis, in mid-telophase, localized in the ingressing cleavage furrow (By similarity). In late telophase, detected at the opposite poles of the daughter cells, in vesicles at the base of lamellipodia formed by the separating daughter cells (By similarity).</text>
</comment>
<comment type="domain">
    <text evidence="4">Switch 1, switch 2 and the interswitch regions are characteristic of Rab GTPases and mediate the interactions with Rab downstream effectors. The switch regions undergo conformational changes upon nucleotide binding which drive interaction with specific sets of effector proteins, with most effectors only binding to GTP-bound Rab.</text>
</comment>
<comment type="similarity">
    <text evidence="7">Belongs to the small GTPase superfamily. Rab family.</text>
</comment>
<evidence type="ECO:0000250" key="1"/>
<evidence type="ECO:0000250" key="2">
    <source>
        <dbReference type="UniProtKB" id="P20339"/>
    </source>
</evidence>
<evidence type="ECO:0000250" key="3">
    <source>
        <dbReference type="UniProtKB" id="P35282"/>
    </source>
</evidence>
<evidence type="ECO:0000250" key="4">
    <source>
        <dbReference type="UniProtKB" id="Q9UL25"/>
    </source>
</evidence>
<evidence type="ECO:0000255" key="5"/>
<evidence type="ECO:0000269" key="6">
    <source>
    </source>
</evidence>
<evidence type="ECO:0000305" key="7"/>
<evidence type="ECO:0000312" key="8">
    <source>
        <dbReference type="RGD" id="1303150"/>
    </source>
</evidence>
<sequence length="223" mass="24163">MAAAGGGAAAAAGRAYSFKVVLLGEGCVGKTSLVLRYCENKFNDKHITTLQASFLTKKLNIGGKRVNLAIWDTAGQERFHALGPIYYRDSNGAILVYDVTDEDSFQKVKNWVKELRKMLGNEICLCIVGNKIDLEKERHVSIQEAESYAESVGAKHYHTSAKQNKGIEELFLDLCKRMIETAQVDERAKGNGSSQAGAARRGVQIIDDEPQAQSGSGGCCSSG</sequence>
<gene>
    <name evidence="8" type="primary">Rab21</name>
</gene>